<accession>Q65670</accession>
<dbReference type="EMBL" id="D84413">
    <property type="protein sequence ID" value="BAA12347.1"/>
    <property type="molecule type" value="Genomic_RNA"/>
</dbReference>
<dbReference type="PIR" id="JC5677">
    <property type="entry name" value="JC5677"/>
</dbReference>
<dbReference type="RefSeq" id="NP_612622.1">
    <property type="nucleotide sequence ID" value="NC_003517.1"/>
</dbReference>
<dbReference type="KEGG" id="vg:991090"/>
<dbReference type="Proteomes" id="UP000001100">
    <property type="component" value="Genome"/>
</dbReference>
<dbReference type="InterPro" id="IPR007004">
    <property type="entry name" value="BNYVV_p31"/>
</dbReference>
<dbReference type="Pfam" id="PF04920">
    <property type="entry name" value="BNYVV_p31"/>
    <property type="match status" value="1"/>
</dbReference>
<protein>
    <recommendedName>
        <fullName>31 kDa protein</fullName>
    </recommendedName>
    <alternativeName>
        <fullName>31k protein</fullName>
    </alternativeName>
    <alternativeName>
        <fullName>p31</fullName>
    </alternativeName>
</protein>
<comment type="function">
    <text evidence="1">Involved in efficient vector transmission. Might slightly enhance symptom expression and increase root-specific silencing suppression (Potential).</text>
</comment>
<gene>
    <name type="primary">p31</name>
</gene>
<feature type="chain" id="PRO_0000412278" description="31 kDa protein">
    <location>
        <begin position="1"/>
        <end position="282"/>
    </location>
</feature>
<keyword id="KW-1185">Reference proteome</keyword>
<organism>
    <name type="scientific">Beet necrotic yellow vein virus (isolate Japan/S)</name>
    <name type="common">BNYVV</name>
    <dbReference type="NCBI Taxonomy" id="652670"/>
    <lineage>
        <taxon>Viruses</taxon>
        <taxon>Riboviria</taxon>
        <taxon>Orthornavirae</taxon>
        <taxon>Kitrinoviricota</taxon>
        <taxon>Alsuviricetes</taxon>
        <taxon>Hepelivirales</taxon>
        <taxon>Benyviridae</taxon>
        <taxon>Benyvirus</taxon>
        <taxon>Beet necrotic yellow vein virus</taxon>
    </lineage>
</organism>
<evidence type="ECO:0000305" key="1"/>
<sequence length="282" mass="31970">MADGEICRCQVTDPPLIRHEDYDCTARMVQKRIEIGPLGVLLNLNMLFHMSRVRHIDVYPYLNNIMSISVSLDVPVSSGVGVGRVRVLIFTTSRERVGIFHGWQVVPGCFLNAPCYSGVDVLSDELCEANITNTSVSSVAMFNGSYRPEDVWILLLTSSTCYGYHDVVVDIEQCTLPSNIDGCVCCSGVCYFNDNHCFCGRRDSNPFNPPCFQFIKDCNELYGTNETKQFICDLVGDDNLDSVNTLTKEGWRRFCDVLWNTTYGDVESRTFARFLWFVFYHD</sequence>
<organismHost>
    <name type="scientific">Beta macrocarpa</name>
    <name type="common">Beet</name>
    <name type="synonym">Beta vulgaris subsp. macrocarpa</name>
    <dbReference type="NCBI Taxonomy" id="343494"/>
</organismHost>
<organismHost>
    <name type="scientific">Beta vulgaris</name>
    <name type="common">Sugar beet</name>
    <dbReference type="NCBI Taxonomy" id="161934"/>
</organismHost>
<organismHost>
    <name type="scientific">Spinacia oleracea</name>
    <name type="common">Spinach</name>
    <dbReference type="NCBI Taxonomy" id="3562"/>
</organismHost>
<reference key="1">
    <citation type="journal article" date="1996" name="Arch. Virol.">
        <title>Complete nucleotide sequence of the Japanese isolate S of beet necrotic yellow vein virus RNA and comparison with European isolates.</title>
        <authorList>
            <person name="Saito M."/>
            <person name="Kiguchi T."/>
            <person name="Kusume T."/>
            <person name="Tamada T."/>
        </authorList>
    </citation>
    <scope>NUCLEOTIDE SEQUENCE [GENOMIC RNA]</scope>
</reference>
<reference key="2">
    <citation type="journal article" date="2007" name="J. Gen. Virol.">
        <title>RNA4-encoded p31 of beet necrotic yellow vein virus is involved in efficient vector transmission, symptom severity and silencing suppression in roots.</title>
        <authorList>
            <person name="Rahim M.D."/>
            <person name="Andika I.B."/>
            <person name="Han C."/>
            <person name="Kondo H."/>
            <person name="Tamada T."/>
        </authorList>
    </citation>
    <scope>FUNCTION</scope>
    <source>
        <strain>Isolate O11</strain>
    </source>
</reference>
<proteinExistence type="predicted"/>
<name>P31_BNYVS</name>